<comment type="function">
    <text>Flagellin is the subunit protein which polymerizes to form the filaments of bacterial flagella. FlaA is essential for flagellar synthesis and full motility. Important for virulence at two different levels: is needed for crossing the fish integument and may play a role once the bacterium has entered the host.</text>
</comment>
<comment type="subunit">
    <text>Heteromer of multiple flagellin subunits including FlaA, FlaB, FlaC, FlaD and possibly FlaE.</text>
</comment>
<comment type="subcellular location">
    <subcellularLocation>
        <location>Secreted</location>
    </subcellularLocation>
    <subcellularLocation>
        <location>Bacterial flagellum</location>
    </subcellularLocation>
</comment>
<comment type="similarity">
    <text evidence="2">Belongs to the bacterial flagellin family.</text>
</comment>
<evidence type="ECO:0000255" key="1"/>
<evidence type="ECO:0000305" key="2"/>
<proteinExistence type="inferred from homology"/>
<feature type="chain" id="PRO_0000182643" description="Flagellin A">
    <location>
        <begin position="1"/>
        <end position="379"/>
    </location>
</feature>
<feature type="coiled-coil region" evidence="1">
    <location>
        <begin position="103"/>
        <end position="128"/>
    </location>
</feature>
<feature type="coiled-coil region" evidence="1">
    <location>
        <begin position="302"/>
        <end position="341"/>
    </location>
</feature>
<organism>
    <name type="scientific">Vibrio anguillarum</name>
    <name type="common">Listonella anguillarum</name>
    <dbReference type="NCBI Taxonomy" id="55601"/>
    <lineage>
        <taxon>Bacteria</taxon>
        <taxon>Pseudomonadati</taxon>
        <taxon>Pseudomonadota</taxon>
        <taxon>Gammaproteobacteria</taxon>
        <taxon>Vibrionales</taxon>
        <taxon>Vibrionaceae</taxon>
        <taxon>Vibrio</taxon>
    </lineage>
</organism>
<sequence length="379" mass="40112">MTITVNTNVSAMTAQRYLNKATGELNTSMERLSSGNKINSAKDDAAGLQISNRLTAQSRGLDVAMRNANDGISIAQTAEGAMNESTSILQRMRDLALQSANGTNSASERQALDEESTALQDELNRIAETTSFGGRKLLNGSFGEASFQIGASSGEAIIMGLTSIRADDFRMGGQSFLAEQGKDKDWGVPAGARDLKFEFTTQAGELVTLDVLAKDGDDIEELATYINGQTDKLKASVDQDGKLQIFAAEPNLQGDLAISGGLATELGLNGGPGVKTTVQDIDITSVGGSQNAVGVLDAALRYVDSQRAELGAKQNRLSHSINNLANIQENVEASNSRIKDTDFAKETTQMTKAQILQQAGTSILAQAKQLPNSAMSLLQ</sequence>
<reference key="1">
    <citation type="journal article" date="1996" name="J. Bacteriol.">
        <title>Flagellin A is essential for the virulence of Vibrio anguillarum.</title>
        <authorList>
            <person name="Milton D.L."/>
            <person name="O'Toole R."/>
            <person name="Hoerstedt P."/>
            <person name="Wolf-Watz H."/>
        </authorList>
    </citation>
    <scope>NUCLEOTIDE SEQUENCE [GENOMIC DNA]</scope>
    <source>
        <strain>NB10 / Serotype O1</strain>
    </source>
</reference>
<name>FLAA_VIBAN</name>
<accession>Q60246</accession>
<gene>
    <name type="primary">flaA</name>
</gene>
<protein>
    <recommendedName>
        <fullName>Flagellin A</fullName>
    </recommendedName>
</protein>
<dbReference type="EMBL" id="L47122">
    <property type="protein sequence ID" value="AAB05995.1"/>
    <property type="molecule type" value="Genomic_DNA"/>
</dbReference>
<dbReference type="PIR" id="JC6021">
    <property type="entry name" value="JC6021"/>
</dbReference>
<dbReference type="RefSeq" id="WP_017045944.1">
    <property type="nucleotide sequence ID" value="NZ_VTYO01000002.1"/>
</dbReference>
<dbReference type="SMR" id="Q60246"/>
<dbReference type="STRING" id="55601.AA407_04000"/>
<dbReference type="OrthoDB" id="9796789at2"/>
<dbReference type="GO" id="GO:0009288">
    <property type="term" value="C:bacterial-type flagellum"/>
    <property type="evidence" value="ECO:0007669"/>
    <property type="project" value="UniProtKB-SubCell"/>
</dbReference>
<dbReference type="GO" id="GO:0005576">
    <property type="term" value="C:extracellular region"/>
    <property type="evidence" value="ECO:0007669"/>
    <property type="project" value="UniProtKB-SubCell"/>
</dbReference>
<dbReference type="GO" id="GO:0005198">
    <property type="term" value="F:structural molecule activity"/>
    <property type="evidence" value="ECO:0007669"/>
    <property type="project" value="InterPro"/>
</dbReference>
<dbReference type="Gene3D" id="2.60.40.4390">
    <property type="match status" value="1"/>
</dbReference>
<dbReference type="Gene3D" id="6.10.280.190">
    <property type="match status" value="1"/>
</dbReference>
<dbReference type="Gene3D" id="1.20.1330.10">
    <property type="entry name" value="f41 fragment of flagellin, N-terminal domain"/>
    <property type="match status" value="1"/>
</dbReference>
<dbReference type="Gene3D" id="6.10.10.10">
    <property type="entry name" value="Flagellar export chaperone, C-terminal domain"/>
    <property type="match status" value="1"/>
</dbReference>
<dbReference type="InterPro" id="IPR001492">
    <property type="entry name" value="Flagellin"/>
</dbReference>
<dbReference type="InterPro" id="IPR046358">
    <property type="entry name" value="Flagellin_C"/>
</dbReference>
<dbReference type="InterPro" id="IPR042187">
    <property type="entry name" value="Flagellin_C_sub2"/>
</dbReference>
<dbReference type="InterPro" id="IPR010810">
    <property type="entry name" value="Flagellin_hook_IN_motif"/>
</dbReference>
<dbReference type="InterPro" id="IPR001029">
    <property type="entry name" value="Flagellin_N"/>
</dbReference>
<dbReference type="NCBIfam" id="NF006466">
    <property type="entry name" value="PRK08869.1-1"/>
    <property type="match status" value="1"/>
</dbReference>
<dbReference type="NCBIfam" id="NF006468">
    <property type="entry name" value="PRK08869.1-3"/>
    <property type="match status" value="1"/>
</dbReference>
<dbReference type="PANTHER" id="PTHR42792">
    <property type="entry name" value="FLAGELLIN"/>
    <property type="match status" value="1"/>
</dbReference>
<dbReference type="PANTHER" id="PTHR42792:SF2">
    <property type="entry name" value="FLAGELLIN"/>
    <property type="match status" value="1"/>
</dbReference>
<dbReference type="Pfam" id="PF00700">
    <property type="entry name" value="Flagellin_C"/>
    <property type="match status" value="1"/>
</dbReference>
<dbReference type="Pfam" id="PF07196">
    <property type="entry name" value="Flagellin_IN"/>
    <property type="match status" value="1"/>
</dbReference>
<dbReference type="Pfam" id="PF00669">
    <property type="entry name" value="Flagellin_N"/>
    <property type="match status" value="1"/>
</dbReference>
<dbReference type="PRINTS" id="PR00207">
    <property type="entry name" value="FLAGELLIN"/>
</dbReference>
<dbReference type="SUPFAM" id="SSF64518">
    <property type="entry name" value="Phase 1 flagellin"/>
    <property type="match status" value="1"/>
</dbReference>
<keyword id="KW-0975">Bacterial flagellum</keyword>
<keyword id="KW-0175">Coiled coil</keyword>
<keyword id="KW-0964">Secreted</keyword>
<keyword id="KW-0843">Virulence</keyword>